<name>RBM48_DANRE</name>
<dbReference type="EMBL" id="AY423031">
    <property type="protein sequence ID" value="AAQ98007.1"/>
    <property type="status" value="ALT_FRAME"/>
    <property type="molecule type" value="mRNA"/>
</dbReference>
<dbReference type="EMBL" id="BX510986">
    <property type="protein sequence ID" value="CAK04237.1"/>
    <property type="molecule type" value="Genomic_DNA"/>
</dbReference>
<dbReference type="EMBL" id="BC091857">
    <property type="protein sequence ID" value="AAH91857.1"/>
    <property type="molecule type" value="mRNA"/>
</dbReference>
<dbReference type="EMBL" id="BC134007">
    <property type="protein sequence ID" value="AAI34008.1"/>
    <property type="molecule type" value="mRNA"/>
</dbReference>
<dbReference type="SMR" id="A4FVJ7"/>
<dbReference type="FunCoup" id="A4FVJ7">
    <property type="interactions" value="1010"/>
</dbReference>
<dbReference type="STRING" id="7955.ENSDARP00000049146"/>
<dbReference type="PaxDb" id="7955-ENSDARP00000049146"/>
<dbReference type="AGR" id="ZFIN:ZDB-GENE-060328-1"/>
<dbReference type="ZFIN" id="ZDB-GENE-060328-1">
    <property type="gene designation" value="rbm48"/>
</dbReference>
<dbReference type="eggNOG" id="ENOG502QSNB">
    <property type="taxonomic scope" value="Eukaryota"/>
</dbReference>
<dbReference type="InParanoid" id="A4FVJ7"/>
<dbReference type="OrthoDB" id="78358at2759"/>
<dbReference type="PhylomeDB" id="A4FVJ7"/>
<dbReference type="TreeFam" id="TF328457"/>
<dbReference type="PRO" id="PR:A4FVJ7"/>
<dbReference type="Proteomes" id="UP000000437">
    <property type="component" value="Unplaced"/>
</dbReference>
<dbReference type="GO" id="GO:0005654">
    <property type="term" value="C:nucleoplasm"/>
    <property type="evidence" value="ECO:0000318"/>
    <property type="project" value="GO_Central"/>
</dbReference>
<dbReference type="GO" id="GO:0005681">
    <property type="term" value="C:spliceosomal complex"/>
    <property type="evidence" value="ECO:0007669"/>
    <property type="project" value="UniProtKB-KW"/>
</dbReference>
<dbReference type="GO" id="GO:0003723">
    <property type="term" value="F:RNA binding"/>
    <property type="evidence" value="ECO:0007669"/>
    <property type="project" value="UniProtKB-KW"/>
</dbReference>
<dbReference type="GO" id="GO:0006397">
    <property type="term" value="P:mRNA processing"/>
    <property type="evidence" value="ECO:0007669"/>
    <property type="project" value="UniProtKB-KW"/>
</dbReference>
<dbReference type="GO" id="GO:0008380">
    <property type="term" value="P:RNA splicing"/>
    <property type="evidence" value="ECO:0007669"/>
    <property type="project" value="UniProtKB-KW"/>
</dbReference>
<dbReference type="CDD" id="cd12442">
    <property type="entry name" value="RRM_RBM48"/>
    <property type="match status" value="1"/>
</dbReference>
<dbReference type="FunFam" id="3.30.70.330:FF:000424">
    <property type="entry name" value="RNA-binding protein 48 isoform X4"/>
    <property type="match status" value="1"/>
</dbReference>
<dbReference type="Gene3D" id="3.30.70.330">
    <property type="match status" value="1"/>
</dbReference>
<dbReference type="InterPro" id="IPR012677">
    <property type="entry name" value="Nucleotide-bd_a/b_plait_sf"/>
</dbReference>
<dbReference type="InterPro" id="IPR035979">
    <property type="entry name" value="RBD_domain_sf"/>
</dbReference>
<dbReference type="InterPro" id="IPR039599">
    <property type="entry name" value="RBM48"/>
</dbReference>
<dbReference type="InterPro" id="IPR034264">
    <property type="entry name" value="RBM48_RRM"/>
</dbReference>
<dbReference type="PANTHER" id="PTHR20957">
    <property type="entry name" value="RNA-BINDING PROTEIN 48"/>
    <property type="match status" value="1"/>
</dbReference>
<dbReference type="PANTHER" id="PTHR20957:SF0">
    <property type="entry name" value="RNA-BINDING PROTEIN 48"/>
    <property type="match status" value="1"/>
</dbReference>
<dbReference type="SUPFAM" id="SSF54928">
    <property type="entry name" value="RNA-binding domain, RBD"/>
    <property type="match status" value="1"/>
</dbReference>
<accession>A4FVJ7</accession>
<accession>Q1LWY9</accession>
<accession>Q58EL1</accession>
<accession>Q6TEL8</accession>
<reference key="1">
    <citation type="journal article" date="2004" name="Proc. Natl. Acad. Sci. U.S.A.">
        <title>Hematopoietic gene expression profile in zebrafish kidney marrow.</title>
        <authorList>
            <person name="Song H.-D."/>
            <person name="Sun X.-J."/>
            <person name="Deng M."/>
            <person name="Zhang G.-W."/>
            <person name="Zhou Y."/>
            <person name="Wu X.-Y."/>
            <person name="Sheng Y."/>
            <person name="Chen Y."/>
            <person name="Ruan Z."/>
            <person name="Jiang C.-L."/>
            <person name="Fan H.-Y."/>
            <person name="Zon L.I."/>
            <person name="Kanki J.P."/>
            <person name="Liu T.X."/>
            <person name="Look A.T."/>
            <person name="Chen Z."/>
        </authorList>
    </citation>
    <scope>NUCLEOTIDE SEQUENCE [LARGE SCALE MRNA]</scope>
    <source>
        <tissue>Kidney marrow</tissue>
    </source>
</reference>
<reference key="2">
    <citation type="journal article" date="2013" name="Nature">
        <title>The zebrafish reference genome sequence and its relationship to the human genome.</title>
        <authorList>
            <person name="Howe K."/>
            <person name="Clark M.D."/>
            <person name="Torroja C.F."/>
            <person name="Torrance J."/>
            <person name="Berthelot C."/>
            <person name="Muffato M."/>
            <person name="Collins J.E."/>
            <person name="Humphray S."/>
            <person name="McLaren K."/>
            <person name="Matthews L."/>
            <person name="McLaren S."/>
            <person name="Sealy I."/>
            <person name="Caccamo M."/>
            <person name="Churcher C."/>
            <person name="Scott C."/>
            <person name="Barrett J.C."/>
            <person name="Koch R."/>
            <person name="Rauch G.J."/>
            <person name="White S."/>
            <person name="Chow W."/>
            <person name="Kilian B."/>
            <person name="Quintais L.T."/>
            <person name="Guerra-Assuncao J.A."/>
            <person name="Zhou Y."/>
            <person name="Gu Y."/>
            <person name="Yen J."/>
            <person name="Vogel J.H."/>
            <person name="Eyre T."/>
            <person name="Redmond S."/>
            <person name="Banerjee R."/>
            <person name="Chi J."/>
            <person name="Fu B."/>
            <person name="Langley E."/>
            <person name="Maguire S.F."/>
            <person name="Laird G.K."/>
            <person name="Lloyd D."/>
            <person name="Kenyon E."/>
            <person name="Donaldson S."/>
            <person name="Sehra H."/>
            <person name="Almeida-King J."/>
            <person name="Loveland J."/>
            <person name="Trevanion S."/>
            <person name="Jones M."/>
            <person name="Quail M."/>
            <person name="Willey D."/>
            <person name="Hunt A."/>
            <person name="Burton J."/>
            <person name="Sims S."/>
            <person name="McLay K."/>
            <person name="Plumb B."/>
            <person name="Davis J."/>
            <person name="Clee C."/>
            <person name="Oliver K."/>
            <person name="Clark R."/>
            <person name="Riddle C."/>
            <person name="Elliot D."/>
            <person name="Threadgold G."/>
            <person name="Harden G."/>
            <person name="Ware D."/>
            <person name="Begum S."/>
            <person name="Mortimore B."/>
            <person name="Kerry G."/>
            <person name="Heath P."/>
            <person name="Phillimore B."/>
            <person name="Tracey A."/>
            <person name="Corby N."/>
            <person name="Dunn M."/>
            <person name="Johnson C."/>
            <person name="Wood J."/>
            <person name="Clark S."/>
            <person name="Pelan S."/>
            <person name="Griffiths G."/>
            <person name="Smith M."/>
            <person name="Glithero R."/>
            <person name="Howden P."/>
            <person name="Barker N."/>
            <person name="Lloyd C."/>
            <person name="Stevens C."/>
            <person name="Harley J."/>
            <person name="Holt K."/>
            <person name="Panagiotidis G."/>
            <person name="Lovell J."/>
            <person name="Beasley H."/>
            <person name="Henderson C."/>
            <person name="Gordon D."/>
            <person name="Auger K."/>
            <person name="Wright D."/>
            <person name="Collins J."/>
            <person name="Raisen C."/>
            <person name="Dyer L."/>
            <person name="Leung K."/>
            <person name="Robertson L."/>
            <person name="Ambridge K."/>
            <person name="Leongamornlert D."/>
            <person name="McGuire S."/>
            <person name="Gilderthorp R."/>
            <person name="Griffiths C."/>
            <person name="Manthravadi D."/>
            <person name="Nichol S."/>
            <person name="Barker G."/>
            <person name="Whitehead S."/>
            <person name="Kay M."/>
            <person name="Brown J."/>
            <person name="Murnane C."/>
            <person name="Gray E."/>
            <person name="Humphries M."/>
            <person name="Sycamore N."/>
            <person name="Barker D."/>
            <person name="Saunders D."/>
            <person name="Wallis J."/>
            <person name="Babbage A."/>
            <person name="Hammond S."/>
            <person name="Mashreghi-Mohammadi M."/>
            <person name="Barr L."/>
            <person name="Martin S."/>
            <person name="Wray P."/>
            <person name="Ellington A."/>
            <person name="Matthews N."/>
            <person name="Ellwood M."/>
            <person name="Woodmansey R."/>
            <person name="Clark G."/>
            <person name="Cooper J."/>
            <person name="Tromans A."/>
            <person name="Grafham D."/>
            <person name="Skuce C."/>
            <person name="Pandian R."/>
            <person name="Andrews R."/>
            <person name="Harrison E."/>
            <person name="Kimberley A."/>
            <person name="Garnett J."/>
            <person name="Fosker N."/>
            <person name="Hall R."/>
            <person name="Garner P."/>
            <person name="Kelly D."/>
            <person name="Bird C."/>
            <person name="Palmer S."/>
            <person name="Gehring I."/>
            <person name="Berger A."/>
            <person name="Dooley C.M."/>
            <person name="Ersan-Urun Z."/>
            <person name="Eser C."/>
            <person name="Geiger H."/>
            <person name="Geisler M."/>
            <person name="Karotki L."/>
            <person name="Kirn A."/>
            <person name="Konantz J."/>
            <person name="Konantz M."/>
            <person name="Oberlander M."/>
            <person name="Rudolph-Geiger S."/>
            <person name="Teucke M."/>
            <person name="Lanz C."/>
            <person name="Raddatz G."/>
            <person name="Osoegawa K."/>
            <person name="Zhu B."/>
            <person name="Rapp A."/>
            <person name="Widaa S."/>
            <person name="Langford C."/>
            <person name="Yang F."/>
            <person name="Schuster S.C."/>
            <person name="Carter N.P."/>
            <person name="Harrow J."/>
            <person name="Ning Z."/>
            <person name="Herrero J."/>
            <person name="Searle S.M."/>
            <person name="Enright A."/>
            <person name="Geisler R."/>
            <person name="Plasterk R.H."/>
            <person name="Lee C."/>
            <person name="Westerfield M."/>
            <person name="de Jong P.J."/>
            <person name="Zon L.I."/>
            <person name="Postlethwait J.H."/>
            <person name="Nusslein-Volhard C."/>
            <person name="Hubbard T.J."/>
            <person name="Roest Crollius H."/>
            <person name="Rogers J."/>
            <person name="Stemple D.L."/>
        </authorList>
    </citation>
    <scope>NUCLEOTIDE SEQUENCE [LARGE SCALE GENOMIC DNA]</scope>
    <source>
        <strain>Tuebingen</strain>
    </source>
</reference>
<reference key="3">
    <citation type="submission" date="2007-03" db="EMBL/GenBank/DDBJ databases">
        <authorList>
            <consortium name="NIH - Zebrafish Gene Collection (ZGC) project"/>
        </authorList>
    </citation>
    <scope>NUCLEOTIDE SEQUENCE [LARGE SCALE MRNA]</scope>
    <source>
        <tissue>Embryo</tissue>
    </source>
</reference>
<gene>
    <name type="primary">rbm48</name>
    <name type="ORF">si:ch211-173p18.5</name>
</gene>
<comment type="function">
    <text evidence="1">As a component of the minor spliceosome, involved in the splicing of U12-type introns in pre-mRNAs.</text>
</comment>
<comment type="subunit">
    <text evidence="1">Component of the minor spliceosome, which splices U12-type introns.</text>
</comment>
<comment type="similarity">
    <text evidence="3">Belongs to the RBM48 family.</text>
</comment>
<comment type="sequence caution" evidence="3">
    <conflict type="frameshift">
        <sequence resource="EMBL-CDS" id="AAQ98007"/>
    </conflict>
</comment>
<organism>
    <name type="scientific">Danio rerio</name>
    <name type="common">Zebrafish</name>
    <name type="synonym">Brachydanio rerio</name>
    <dbReference type="NCBI Taxonomy" id="7955"/>
    <lineage>
        <taxon>Eukaryota</taxon>
        <taxon>Metazoa</taxon>
        <taxon>Chordata</taxon>
        <taxon>Craniata</taxon>
        <taxon>Vertebrata</taxon>
        <taxon>Euteleostomi</taxon>
        <taxon>Actinopterygii</taxon>
        <taxon>Neopterygii</taxon>
        <taxon>Teleostei</taxon>
        <taxon>Ostariophysi</taxon>
        <taxon>Cypriniformes</taxon>
        <taxon>Danionidae</taxon>
        <taxon>Danioninae</taxon>
        <taxon>Danio</taxon>
    </lineage>
</organism>
<sequence length="364" mass="41557">MDGSVASSSVWDTQKVYKHHEQQNVAQTRPKYREGRRLKAVKVYTINLESRYLLVQGVPAIGVMAELVQLFALYGVIEEYRPLDEYPAEQFTEVYLIQFQKLTSARAAKRHTDEKSFFGGQLHVCYAPEYETVEETKQKLQDRRRYVNWASQNAAKLHSQQAEVNTESSSSTDTRTAEAPIMQKNPEEARRENVNSDYMGFPLLPLPPTADISYRLQNHFTQPSQLQWTKETTEDKMGSLHNFIPPVQKTSTQSESSSSSGVKEGDLRQKQKISTPSIRFMPRTTHLESRKRKLDEQTFFLKEADKTGVLIGPKLPELPKLDMEDSSLNVTANLIRNTMTKAASVPEAKPVQAKHTTPKPRRRI</sequence>
<proteinExistence type="evidence at transcript level"/>
<protein>
    <recommendedName>
        <fullName>RNA-binding protein 48</fullName>
    </recommendedName>
</protein>
<feature type="chain" id="PRO_0000360426" description="RNA-binding protein 48">
    <location>
        <begin position="1"/>
        <end position="364"/>
    </location>
</feature>
<feature type="domain" description="RRM">
    <location>
        <begin position="51"/>
        <end position="129"/>
    </location>
</feature>
<feature type="region of interest" description="Disordered" evidence="2">
    <location>
        <begin position="157"/>
        <end position="191"/>
    </location>
</feature>
<feature type="region of interest" description="Disordered" evidence="2">
    <location>
        <begin position="239"/>
        <end position="291"/>
    </location>
</feature>
<feature type="region of interest" description="Disordered" evidence="2">
    <location>
        <begin position="343"/>
        <end position="364"/>
    </location>
</feature>
<feature type="compositionally biased region" description="Polar residues" evidence="2">
    <location>
        <begin position="157"/>
        <end position="174"/>
    </location>
</feature>
<feature type="compositionally biased region" description="Low complexity" evidence="2">
    <location>
        <begin position="247"/>
        <end position="262"/>
    </location>
</feature>
<feature type="sequence conflict" description="In Ref. 2; CAK04237." evidence="3" ref="2">
    <original>Q</original>
    <variation>E</variation>
    <location>
        <position position="90"/>
    </location>
</feature>
<feature type="sequence conflict" description="In Ref. 2; CAK04237." evidence="3" ref="2">
    <original>Q</original>
    <variation>R</variation>
    <location>
        <position position="152"/>
    </location>
</feature>
<feature type="sequence conflict" description="In Ref. 2; CAK04237." evidence="3" ref="2">
    <original>K</original>
    <variation>Q</variation>
    <location>
        <position position="156"/>
    </location>
</feature>
<feature type="sequence conflict" description="In Ref. 1; AAQ98007 and 2; CAK04237." evidence="3" ref="1 2">
    <original>I</original>
    <variation>K</variation>
    <location>
        <position position="181"/>
    </location>
</feature>
<feature type="sequence conflict" description="In Ref. 1; AAQ98007 and 2; CAK04237." evidence="3" ref="1 2">
    <original>K</original>
    <variation>N</variation>
    <location>
        <position position="230"/>
    </location>
</feature>
<feature type="sequence conflict" description="In Ref. 2; CAK04237." evidence="3" ref="2">
    <original>Q</original>
    <variation>L</variation>
    <location>
        <position position="352"/>
    </location>
</feature>
<evidence type="ECO:0000250" key="1">
    <source>
        <dbReference type="UniProtKB" id="Q5RL73"/>
    </source>
</evidence>
<evidence type="ECO:0000256" key="2">
    <source>
        <dbReference type="SAM" id="MobiDB-lite"/>
    </source>
</evidence>
<evidence type="ECO:0000305" key="3"/>
<keyword id="KW-0507">mRNA processing</keyword>
<keyword id="KW-0508">mRNA splicing</keyword>
<keyword id="KW-1185">Reference proteome</keyword>
<keyword id="KW-0694">RNA-binding</keyword>
<keyword id="KW-0747">Spliceosome</keyword>